<evidence type="ECO:0000255" key="1">
    <source>
        <dbReference type="HAMAP-Rule" id="MF_01577"/>
    </source>
</evidence>
<keyword id="KW-0997">Cell inner membrane</keyword>
<keyword id="KW-1003">Cell membrane</keyword>
<keyword id="KW-0472">Membrane</keyword>
<keyword id="KW-1185">Reference proteome</keyword>
<keyword id="KW-0812">Transmembrane</keyword>
<keyword id="KW-1133">Transmembrane helix</keyword>
<keyword id="KW-0813">Transport</keyword>
<sequence>MTELPDSTRWQLWIVAFGFFMQSLDTTIVNTALPSMALSLGESPLHMHMVVVSYVLTVAVMLPASGWLADKVGVRNIFFTAIVLFTLGSLFCAWSSTLNELVLARVLQGVGGAMMVPVGRLTVMKIVPREQYMAAMTFVTLPGQVGPLLGPALGGILVEYASWHWIFLINIPVGIVGAIATLMLMPNYTMQTRRFDLSGFLLLAVGMAVLTMALDGSKGTGLSPLSLGALVLCGILAIALYLKHAKNNPRALFSLALFRTHTFSLGLSGSFAGRVGSGMLPFMTPVFLQIGLGFSPFHAGLMMIPMVLGSMGMKRIVVQVVNRFGYRRVLVATTLGLSLVSLLFMSVAMLGWYYALPFVLFLQGMVNSTRFSSMNTLTLKDLPDELASSGNSLLSMIMQLSMSIGVTIAGLLLGMFGQQHIAADSGASHTVFMYTWLCMALIIALPALIFARVPNDTHKNAVISRRKRSTQ</sequence>
<organism>
    <name type="scientific">Citrobacter koseri (strain ATCC BAA-895 / CDC 4225-83 / SGSC4696)</name>
    <dbReference type="NCBI Taxonomy" id="290338"/>
    <lineage>
        <taxon>Bacteria</taxon>
        <taxon>Pseudomonadati</taxon>
        <taxon>Pseudomonadota</taxon>
        <taxon>Gammaproteobacteria</taxon>
        <taxon>Enterobacterales</taxon>
        <taxon>Enterobacteriaceae</taxon>
        <taxon>Citrobacter</taxon>
    </lineage>
</organism>
<name>MDTD_CITK8</name>
<accession>A8AEE4</accession>
<protein>
    <recommendedName>
        <fullName evidence="1">Putative multidrug resistance protein MdtD</fullName>
    </recommendedName>
</protein>
<feature type="chain" id="PRO_0000365277" description="Putative multidrug resistance protein MdtD">
    <location>
        <begin position="1"/>
        <end position="471"/>
    </location>
</feature>
<feature type="transmembrane region" description="Helical" evidence="1">
    <location>
        <begin position="12"/>
        <end position="32"/>
    </location>
</feature>
<feature type="transmembrane region" description="Helical" evidence="1">
    <location>
        <begin position="49"/>
        <end position="69"/>
    </location>
</feature>
<feature type="transmembrane region" description="Helical" evidence="1">
    <location>
        <begin position="77"/>
        <end position="97"/>
    </location>
</feature>
<feature type="transmembrane region" description="Helical" evidence="1">
    <location>
        <begin position="102"/>
        <end position="124"/>
    </location>
</feature>
<feature type="transmembrane region" description="Helical" evidence="1">
    <location>
        <begin position="138"/>
        <end position="158"/>
    </location>
</feature>
<feature type="transmembrane region" description="Helical" evidence="1">
    <location>
        <begin position="165"/>
        <end position="185"/>
    </location>
</feature>
<feature type="transmembrane region" description="Helical" evidence="1">
    <location>
        <begin position="197"/>
        <end position="217"/>
    </location>
</feature>
<feature type="transmembrane region" description="Helical" evidence="1">
    <location>
        <begin position="222"/>
        <end position="242"/>
    </location>
</feature>
<feature type="transmembrane region" description="Helical" evidence="1">
    <location>
        <begin position="263"/>
        <end position="283"/>
    </location>
</feature>
<feature type="transmembrane region" description="Helical" evidence="1">
    <location>
        <begin position="286"/>
        <end position="306"/>
    </location>
</feature>
<feature type="transmembrane region" description="Helical" evidence="1">
    <location>
        <begin position="342"/>
        <end position="362"/>
    </location>
</feature>
<feature type="transmembrane region" description="Helical" evidence="1">
    <location>
        <begin position="396"/>
        <end position="416"/>
    </location>
</feature>
<feature type="transmembrane region" description="Helical" evidence="1">
    <location>
        <begin position="431"/>
        <end position="451"/>
    </location>
</feature>
<dbReference type="EMBL" id="CP000822">
    <property type="protein sequence ID" value="ABV11857.1"/>
    <property type="molecule type" value="Genomic_DNA"/>
</dbReference>
<dbReference type="RefSeq" id="WP_012131681.1">
    <property type="nucleotide sequence ID" value="NC_009792.1"/>
</dbReference>
<dbReference type="SMR" id="A8AEE4"/>
<dbReference type="STRING" id="290338.CKO_00704"/>
<dbReference type="GeneID" id="45134920"/>
<dbReference type="KEGG" id="cko:CKO_00704"/>
<dbReference type="HOGENOM" id="CLU_000960_28_0_6"/>
<dbReference type="OrthoDB" id="9812221at2"/>
<dbReference type="Proteomes" id="UP000008148">
    <property type="component" value="Chromosome"/>
</dbReference>
<dbReference type="GO" id="GO:0005886">
    <property type="term" value="C:plasma membrane"/>
    <property type="evidence" value="ECO:0007669"/>
    <property type="project" value="UniProtKB-SubCell"/>
</dbReference>
<dbReference type="GO" id="GO:0022857">
    <property type="term" value="F:transmembrane transporter activity"/>
    <property type="evidence" value="ECO:0007669"/>
    <property type="project" value="UniProtKB-UniRule"/>
</dbReference>
<dbReference type="CDD" id="cd17503">
    <property type="entry name" value="MFS_LmrB_MDR_like"/>
    <property type="match status" value="1"/>
</dbReference>
<dbReference type="FunFam" id="1.20.1250.20:FF:000021">
    <property type="entry name" value="Putative multidrug resistance protein MdtD"/>
    <property type="match status" value="1"/>
</dbReference>
<dbReference type="FunFam" id="1.20.1720.10:FF:000001">
    <property type="entry name" value="Putative multidrug resistance protein MdtD"/>
    <property type="match status" value="1"/>
</dbReference>
<dbReference type="Gene3D" id="1.20.1250.20">
    <property type="entry name" value="MFS general substrate transporter like domains"/>
    <property type="match status" value="1"/>
</dbReference>
<dbReference type="Gene3D" id="1.20.1720.10">
    <property type="entry name" value="Multidrug resistance protein D"/>
    <property type="match status" value="1"/>
</dbReference>
<dbReference type="HAMAP" id="MF_01577">
    <property type="entry name" value="MFS_MdtD"/>
    <property type="match status" value="1"/>
</dbReference>
<dbReference type="InterPro" id="IPR011701">
    <property type="entry name" value="MFS"/>
</dbReference>
<dbReference type="InterPro" id="IPR020846">
    <property type="entry name" value="MFS_dom"/>
</dbReference>
<dbReference type="InterPro" id="IPR036259">
    <property type="entry name" value="MFS_trans_sf"/>
</dbReference>
<dbReference type="InterPro" id="IPR023721">
    <property type="entry name" value="Multi-R_MdtD"/>
</dbReference>
<dbReference type="NCBIfam" id="NF007799">
    <property type="entry name" value="PRK10504.1"/>
    <property type="match status" value="1"/>
</dbReference>
<dbReference type="PANTHER" id="PTHR42718:SF46">
    <property type="entry name" value="BLR6921 PROTEIN"/>
    <property type="match status" value="1"/>
</dbReference>
<dbReference type="PANTHER" id="PTHR42718">
    <property type="entry name" value="MAJOR FACILITATOR SUPERFAMILY MULTIDRUG TRANSPORTER MFSC"/>
    <property type="match status" value="1"/>
</dbReference>
<dbReference type="Pfam" id="PF07690">
    <property type="entry name" value="MFS_1"/>
    <property type="match status" value="1"/>
</dbReference>
<dbReference type="PRINTS" id="PR01036">
    <property type="entry name" value="TCRTETB"/>
</dbReference>
<dbReference type="SUPFAM" id="SSF103473">
    <property type="entry name" value="MFS general substrate transporter"/>
    <property type="match status" value="1"/>
</dbReference>
<dbReference type="PROSITE" id="PS50850">
    <property type="entry name" value="MFS"/>
    <property type="match status" value="1"/>
</dbReference>
<proteinExistence type="inferred from homology"/>
<gene>
    <name evidence="1" type="primary">mdtD</name>
    <name type="ordered locus">CKO_00704</name>
</gene>
<comment type="subcellular location">
    <subcellularLocation>
        <location evidence="1">Cell inner membrane</location>
        <topology evidence="1">Multi-pass membrane protein</topology>
    </subcellularLocation>
</comment>
<comment type="similarity">
    <text evidence="1">Belongs to the major facilitator superfamily. TCR/Tet family.</text>
</comment>
<reference key="1">
    <citation type="submission" date="2007-08" db="EMBL/GenBank/DDBJ databases">
        <authorList>
            <consortium name="The Citrobacter koseri Genome Sequencing Project"/>
            <person name="McClelland M."/>
            <person name="Sanderson E.K."/>
            <person name="Porwollik S."/>
            <person name="Spieth J."/>
            <person name="Clifton W.S."/>
            <person name="Latreille P."/>
            <person name="Courtney L."/>
            <person name="Wang C."/>
            <person name="Pepin K."/>
            <person name="Bhonagiri V."/>
            <person name="Nash W."/>
            <person name="Johnson M."/>
            <person name="Thiruvilangam P."/>
            <person name="Wilson R."/>
        </authorList>
    </citation>
    <scope>NUCLEOTIDE SEQUENCE [LARGE SCALE GENOMIC DNA]</scope>
    <source>
        <strain>ATCC BAA-895 / CDC 4225-83 / SGSC4696</strain>
    </source>
</reference>